<accession>Q8GWR1</accession>
<accession>Q9LER8</accession>
<name>AAAS_ARATH</name>
<sequence length="447" mass="48486">MASFPHPGSVTVCEINRDLITAQNLSDERAQETYGKVLGMVFSPVSFDSTPSSLQENEGQENGDKASGESKGLVATLQMKVADSLKQILQPTDVTLLSEIDLQGVSWHQGKHIIAFISGANQVTIRDYEDKDEKEPCILTSDSQRNVKALEWRPNGGKSLSIACRGGICIWAASYPGNMALVRSGGSALRGSLSRGSGTRWILVDFLRCQNDEQISALSWSPCGRYLASASYDSSSFTIWDVSQGAGTPIRRGLGGISMLKWSPTGDYFFAARFDGTFCLWETNTWTSEPWSLSSGSGSVTGAIWDPEGRFILISFSKSSTLGSVHFSSKPPSLDAHLLPVELPEIASLTGCEGIEKIAWDASGERLAVSYKGGDENYKGLIAIYDTRRTPIVSASLVGFIRGPGENPKALSFSFHDKFKQGPLLSVCWSTGFCCTYPLIFRSHVLP</sequence>
<gene>
    <name evidence="4" type="primary">AAAS</name>
    <name evidence="7" type="ordered locus">At3g56900</name>
    <name evidence="9" type="ORF">T8M16.230</name>
</gene>
<reference key="1">
    <citation type="journal article" date="2000" name="Nature">
        <title>Sequence and analysis of chromosome 3 of the plant Arabidopsis thaliana.</title>
        <authorList>
            <person name="Salanoubat M."/>
            <person name="Lemcke K."/>
            <person name="Rieger M."/>
            <person name="Ansorge W."/>
            <person name="Unseld M."/>
            <person name="Fartmann B."/>
            <person name="Valle G."/>
            <person name="Bloecker H."/>
            <person name="Perez-Alonso M."/>
            <person name="Obermaier B."/>
            <person name="Delseny M."/>
            <person name="Boutry M."/>
            <person name="Grivell L.A."/>
            <person name="Mache R."/>
            <person name="Puigdomenech P."/>
            <person name="De Simone V."/>
            <person name="Choisne N."/>
            <person name="Artiguenave F."/>
            <person name="Robert C."/>
            <person name="Brottier P."/>
            <person name="Wincker P."/>
            <person name="Cattolico L."/>
            <person name="Weissenbach J."/>
            <person name="Saurin W."/>
            <person name="Quetier F."/>
            <person name="Schaefer M."/>
            <person name="Mueller-Auer S."/>
            <person name="Gabel C."/>
            <person name="Fuchs M."/>
            <person name="Benes V."/>
            <person name="Wurmbach E."/>
            <person name="Drzonek H."/>
            <person name="Erfle H."/>
            <person name="Jordan N."/>
            <person name="Bangert S."/>
            <person name="Wiedelmann R."/>
            <person name="Kranz H."/>
            <person name="Voss H."/>
            <person name="Holland R."/>
            <person name="Brandt P."/>
            <person name="Nyakatura G."/>
            <person name="Vezzi A."/>
            <person name="D'Angelo M."/>
            <person name="Pallavicini A."/>
            <person name="Toppo S."/>
            <person name="Simionati B."/>
            <person name="Conrad A."/>
            <person name="Hornischer K."/>
            <person name="Kauer G."/>
            <person name="Loehnert T.-H."/>
            <person name="Nordsiek G."/>
            <person name="Reichelt J."/>
            <person name="Scharfe M."/>
            <person name="Schoen O."/>
            <person name="Bargues M."/>
            <person name="Terol J."/>
            <person name="Climent J."/>
            <person name="Navarro P."/>
            <person name="Collado C."/>
            <person name="Perez-Perez A."/>
            <person name="Ottenwaelder B."/>
            <person name="Duchemin D."/>
            <person name="Cooke R."/>
            <person name="Laudie M."/>
            <person name="Berger-Llauro C."/>
            <person name="Purnelle B."/>
            <person name="Masuy D."/>
            <person name="de Haan M."/>
            <person name="Maarse A.C."/>
            <person name="Alcaraz J.-P."/>
            <person name="Cottet A."/>
            <person name="Casacuberta E."/>
            <person name="Monfort A."/>
            <person name="Argiriou A."/>
            <person name="Flores M."/>
            <person name="Liguori R."/>
            <person name="Vitale D."/>
            <person name="Mannhaupt G."/>
            <person name="Haase D."/>
            <person name="Schoof H."/>
            <person name="Rudd S."/>
            <person name="Zaccaria P."/>
            <person name="Mewes H.-W."/>
            <person name="Mayer K.F.X."/>
            <person name="Kaul S."/>
            <person name="Town C.D."/>
            <person name="Koo H.L."/>
            <person name="Tallon L.J."/>
            <person name="Jenkins J."/>
            <person name="Rooney T."/>
            <person name="Rizzo M."/>
            <person name="Walts A."/>
            <person name="Utterback T."/>
            <person name="Fujii C.Y."/>
            <person name="Shea T.P."/>
            <person name="Creasy T.H."/>
            <person name="Haas B."/>
            <person name="Maiti R."/>
            <person name="Wu D."/>
            <person name="Peterson J."/>
            <person name="Van Aken S."/>
            <person name="Pai G."/>
            <person name="Militscher J."/>
            <person name="Sellers P."/>
            <person name="Gill J.E."/>
            <person name="Feldblyum T.V."/>
            <person name="Preuss D."/>
            <person name="Lin X."/>
            <person name="Nierman W.C."/>
            <person name="Salzberg S.L."/>
            <person name="White O."/>
            <person name="Venter J.C."/>
            <person name="Fraser C.M."/>
            <person name="Kaneko T."/>
            <person name="Nakamura Y."/>
            <person name="Sato S."/>
            <person name="Kato T."/>
            <person name="Asamizu E."/>
            <person name="Sasamoto S."/>
            <person name="Kimura T."/>
            <person name="Idesawa K."/>
            <person name="Kawashima K."/>
            <person name="Kishida Y."/>
            <person name="Kiyokawa C."/>
            <person name="Kohara M."/>
            <person name="Matsumoto M."/>
            <person name="Matsuno A."/>
            <person name="Muraki A."/>
            <person name="Nakayama S."/>
            <person name="Nakazaki N."/>
            <person name="Shinpo S."/>
            <person name="Takeuchi C."/>
            <person name="Wada T."/>
            <person name="Watanabe A."/>
            <person name="Yamada M."/>
            <person name="Yasuda M."/>
            <person name="Tabata S."/>
        </authorList>
    </citation>
    <scope>NUCLEOTIDE SEQUENCE [LARGE SCALE GENOMIC DNA]</scope>
    <source>
        <strain>cv. Columbia</strain>
    </source>
</reference>
<reference key="2">
    <citation type="journal article" date="2017" name="Plant J.">
        <title>Araport11: a complete reannotation of the Arabidopsis thaliana reference genome.</title>
        <authorList>
            <person name="Cheng C.Y."/>
            <person name="Krishnakumar V."/>
            <person name="Chan A.P."/>
            <person name="Thibaud-Nissen F."/>
            <person name="Schobel S."/>
            <person name="Town C.D."/>
        </authorList>
    </citation>
    <scope>GENOME REANNOTATION</scope>
    <source>
        <strain>cv. Columbia</strain>
    </source>
</reference>
<reference key="3">
    <citation type="journal article" date="2002" name="Science">
        <title>Functional annotation of a full-length Arabidopsis cDNA collection.</title>
        <authorList>
            <person name="Seki M."/>
            <person name="Narusaka M."/>
            <person name="Kamiya A."/>
            <person name="Ishida J."/>
            <person name="Satou M."/>
            <person name="Sakurai T."/>
            <person name="Nakajima M."/>
            <person name="Enju A."/>
            <person name="Akiyama K."/>
            <person name="Oono Y."/>
            <person name="Muramatsu M."/>
            <person name="Hayashizaki Y."/>
            <person name="Kawai J."/>
            <person name="Carninci P."/>
            <person name="Itoh M."/>
            <person name="Ishii Y."/>
            <person name="Arakawa T."/>
            <person name="Shibata K."/>
            <person name="Shinagawa A."/>
            <person name="Shinozaki K."/>
        </authorList>
    </citation>
    <scope>NUCLEOTIDE SEQUENCE [LARGE SCALE MRNA]</scope>
    <source>
        <strain>cv. Columbia</strain>
    </source>
</reference>
<reference key="4">
    <citation type="journal article" date="2003" name="Science">
        <title>Empirical analysis of transcriptional activity in the Arabidopsis genome.</title>
        <authorList>
            <person name="Yamada K."/>
            <person name="Lim J."/>
            <person name="Dale J.M."/>
            <person name="Chen H."/>
            <person name="Shinn P."/>
            <person name="Palm C.J."/>
            <person name="Southwick A.M."/>
            <person name="Wu H.C."/>
            <person name="Kim C.J."/>
            <person name="Nguyen M."/>
            <person name="Pham P.K."/>
            <person name="Cheuk R.F."/>
            <person name="Karlin-Newmann G."/>
            <person name="Liu S.X."/>
            <person name="Lam B."/>
            <person name="Sakano H."/>
            <person name="Wu T."/>
            <person name="Yu G."/>
            <person name="Miranda M."/>
            <person name="Quach H.L."/>
            <person name="Tripp M."/>
            <person name="Chang C.H."/>
            <person name="Lee J.M."/>
            <person name="Toriumi M.J."/>
            <person name="Chan M.M."/>
            <person name="Tang C.C."/>
            <person name="Onodera C.S."/>
            <person name="Deng J.M."/>
            <person name="Akiyama K."/>
            <person name="Ansari Y."/>
            <person name="Arakawa T."/>
            <person name="Banh J."/>
            <person name="Banno F."/>
            <person name="Bowser L."/>
            <person name="Brooks S.Y."/>
            <person name="Carninci P."/>
            <person name="Chao Q."/>
            <person name="Choy N."/>
            <person name="Enju A."/>
            <person name="Goldsmith A.D."/>
            <person name="Gurjal M."/>
            <person name="Hansen N.F."/>
            <person name="Hayashizaki Y."/>
            <person name="Johnson-Hopson C."/>
            <person name="Hsuan V.W."/>
            <person name="Iida K."/>
            <person name="Karnes M."/>
            <person name="Khan S."/>
            <person name="Koesema E."/>
            <person name="Ishida J."/>
            <person name="Jiang P.X."/>
            <person name="Jones T."/>
            <person name="Kawai J."/>
            <person name="Kamiya A."/>
            <person name="Meyers C."/>
            <person name="Nakajima M."/>
            <person name="Narusaka M."/>
            <person name="Seki M."/>
            <person name="Sakurai T."/>
            <person name="Satou M."/>
            <person name="Tamse R."/>
            <person name="Vaysberg M."/>
            <person name="Wallender E.K."/>
            <person name="Wong C."/>
            <person name="Yamamura Y."/>
            <person name="Yuan S."/>
            <person name="Shinozaki K."/>
            <person name="Davis R.W."/>
            <person name="Theologis A."/>
            <person name="Ecker J.R."/>
        </authorList>
    </citation>
    <scope>NUCLEOTIDE SEQUENCE [LARGE SCALE MRNA]</scope>
    <source>
        <strain>cv. Columbia</strain>
    </source>
</reference>
<reference key="5">
    <citation type="journal article" date="2010" name="Plant Cell">
        <title>Identification and characterization of nuclear pore complex components in Arabidopsis thaliana.</title>
        <authorList>
            <person name="Tamura K."/>
            <person name="Fukao Y."/>
            <person name="Iwamoto M."/>
            <person name="Haraguchi T."/>
            <person name="Hara-Nishimura I."/>
        </authorList>
    </citation>
    <scope>IDENTIFICATION IN THE NUCLEAR PORE COMPLEX BY MASS SPECTROMETRY</scope>
    <scope>SUBCELLULAR LOCATION</scope>
    <scope>NOMENCLATURE</scope>
</reference>
<keyword id="KW-0509">mRNA transport</keyword>
<keyword id="KW-0906">Nuclear pore complex</keyword>
<keyword id="KW-0539">Nucleus</keyword>
<keyword id="KW-0653">Protein transport</keyword>
<keyword id="KW-1185">Reference proteome</keyword>
<keyword id="KW-0677">Repeat</keyword>
<keyword id="KW-0811">Translocation</keyword>
<keyword id="KW-0813">Transport</keyword>
<keyword id="KW-0853">WD repeat</keyword>
<organism evidence="8">
    <name type="scientific">Arabidopsis thaliana</name>
    <name type="common">Mouse-ear cress</name>
    <dbReference type="NCBI Taxonomy" id="3702"/>
    <lineage>
        <taxon>Eukaryota</taxon>
        <taxon>Viridiplantae</taxon>
        <taxon>Streptophyta</taxon>
        <taxon>Embryophyta</taxon>
        <taxon>Tracheophyta</taxon>
        <taxon>Spermatophyta</taxon>
        <taxon>Magnoliopsida</taxon>
        <taxon>eudicotyledons</taxon>
        <taxon>Gunneridae</taxon>
        <taxon>Pentapetalae</taxon>
        <taxon>rosids</taxon>
        <taxon>malvids</taxon>
        <taxon>Brassicales</taxon>
        <taxon>Brassicaceae</taxon>
        <taxon>Camelineae</taxon>
        <taxon>Arabidopsis</taxon>
    </lineage>
</organism>
<feature type="chain" id="PRO_0000431092" description="Aladin">
    <location>
        <begin position="1"/>
        <end position="447"/>
    </location>
</feature>
<feature type="repeat" description="WD 1" evidence="1">
    <location>
        <begin position="97"/>
        <end position="138"/>
    </location>
</feature>
<feature type="repeat" description="WD 2" evidence="1">
    <location>
        <begin position="142"/>
        <end position="181"/>
    </location>
</feature>
<feature type="repeat" description="WD 3" evidence="1">
    <location>
        <begin position="210"/>
        <end position="250"/>
    </location>
</feature>
<feature type="repeat" description="WD 4" evidence="1">
    <location>
        <begin position="252"/>
        <end position="291"/>
    </location>
</feature>
<feature type="region of interest" description="Disordered" evidence="2">
    <location>
        <begin position="49"/>
        <end position="69"/>
    </location>
</feature>
<protein>
    <recommendedName>
        <fullName evidence="4">Aladin</fullName>
    </recommendedName>
</protein>
<evidence type="ECO:0000255" key="1"/>
<evidence type="ECO:0000256" key="2">
    <source>
        <dbReference type="SAM" id="MobiDB-lite"/>
    </source>
</evidence>
<evidence type="ECO:0000269" key="3">
    <source>
    </source>
</evidence>
<evidence type="ECO:0000303" key="4">
    <source>
    </source>
</evidence>
<evidence type="ECO:0000305" key="5"/>
<evidence type="ECO:0000305" key="6">
    <source>
    </source>
</evidence>
<evidence type="ECO:0000312" key="7">
    <source>
        <dbReference type="Araport" id="AT3G56900"/>
    </source>
</evidence>
<evidence type="ECO:0000312" key="8">
    <source>
        <dbReference type="EMBL" id="BAC43280.1"/>
    </source>
</evidence>
<evidence type="ECO:0000312" key="9">
    <source>
        <dbReference type="EMBL" id="CAC00753.1"/>
    </source>
</evidence>
<dbReference type="EMBL" id="AL390921">
    <property type="protein sequence ID" value="CAC00753.1"/>
    <property type="status" value="ALT_SEQ"/>
    <property type="molecule type" value="Genomic_DNA"/>
</dbReference>
<dbReference type="EMBL" id="CP002686">
    <property type="protein sequence ID" value="AEE79584.1"/>
    <property type="molecule type" value="Genomic_DNA"/>
</dbReference>
<dbReference type="EMBL" id="AK118686">
    <property type="protein sequence ID" value="BAC43280.1"/>
    <property type="molecule type" value="mRNA"/>
</dbReference>
<dbReference type="EMBL" id="BT005366">
    <property type="protein sequence ID" value="AAO63430.1"/>
    <property type="molecule type" value="mRNA"/>
</dbReference>
<dbReference type="PIR" id="T51278">
    <property type="entry name" value="T51278"/>
</dbReference>
<dbReference type="RefSeq" id="NP_191249.2">
    <property type="nucleotide sequence ID" value="NM_115549.5"/>
</dbReference>
<dbReference type="SMR" id="Q8GWR1"/>
<dbReference type="BioGRID" id="10173">
    <property type="interactions" value="5"/>
</dbReference>
<dbReference type="FunCoup" id="Q8GWR1">
    <property type="interactions" value="4028"/>
</dbReference>
<dbReference type="IntAct" id="Q8GWR1">
    <property type="interactions" value="3"/>
</dbReference>
<dbReference type="STRING" id="3702.Q8GWR1"/>
<dbReference type="GlyGen" id="Q8GWR1">
    <property type="glycosylation" value="1 site"/>
</dbReference>
<dbReference type="PaxDb" id="3702-AT3G56900.1"/>
<dbReference type="ProteomicsDB" id="245150"/>
<dbReference type="EnsemblPlants" id="AT3G56900.1">
    <property type="protein sequence ID" value="AT3G56900.1"/>
    <property type="gene ID" value="AT3G56900"/>
</dbReference>
<dbReference type="GeneID" id="824857"/>
<dbReference type="Gramene" id="AT3G56900.1">
    <property type="protein sequence ID" value="AT3G56900.1"/>
    <property type="gene ID" value="AT3G56900"/>
</dbReference>
<dbReference type="KEGG" id="ath:AT3G56900"/>
<dbReference type="Araport" id="AT3G56900"/>
<dbReference type="TAIR" id="AT3G56900">
    <property type="gene designation" value="ALADIN"/>
</dbReference>
<dbReference type="eggNOG" id="KOG2139">
    <property type="taxonomic scope" value="Eukaryota"/>
</dbReference>
<dbReference type="HOGENOM" id="CLU_027691_2_1_1"/>
<dbReference type="InParanoid" id="Q8GWR1"/>
<dbReference type="OMA" id="FQPLYKD"/>
<dbReference type="PhylomeDB" id="Q8GWR1"/>
<dbReference type="PRO" id="PR:Q8GWR1"/>
<dbReference type="Proteomes" id="UP000006548">
    <property type="component" value="Chromosome 3"/>
</dbReference>
<dbReference type="ExpressionAtlas" id="Q8GWR1">
    <property type="expression patterns" value="baseline and differential"/>
</dbReference>
<dbReference type="GO" id="GO:0005783">
    <property type="term" value="C:endoplasmic reticulum"/>
    <property type="evidence" value="ECO:0007005"/>
    <property type="project" value="TAIR"/>
</dbReference>
<dbReference type="GO" id="GO:0005635">
    <property type="term" value="C:nuclear envelope"/>
    <property type="evidence" value="ECO:0000314"/>
    <property type="project" value="TAIR"/>
</dbReference>
<dbReference type="GO" id="GO:0005643">
    <property type="term" value="C:nuclear pore"/>
    <property type="evidence" value="ECO:0007669"/>
    <property type="project" value="UniProtKB-SubCell"/>
</dbReference>
<dbReference type="GO" id="GO:0051028">
    <property type="term" value="P:mRNA transport"/>
    <property type="evidence" value="ECO:0007669"/>
    <property type="project" value="UniProtKB-KW"/>
</dbReference>
<dbReference type="GO" id="GO:0015031">
    <property type="term" value="P:protein transport"/>
    <property type="evidence" value="ECO:0007669"/>
    <property type="project" value="UniProtKB-KW"/>
</dbReference>
<dbReference type="FunFam" id="2.130.10.10:FF:000434">
    <property type="entry name" value="Aladin isoform A"/>
    <property type="match status" value="1"/>
</dbReference>
<dbReference type="Gene3D" id="2.130.10.10">
    <property type="entry name" value="YVTN repeat-like/Quinoprotein amine dehydrogenase"/>
    <property type="match status" value="2"/>
</dbReference>
<dbReference type="InterPro" id="IPR045139">
    <property type="entry name" value="Aladin"/>
</dbReference>
<dbReference type="InterPro" id="IPR015943">
    <property type="entry name" value="WD40/YVTN_repeat-like_dom_sf"/>
</dbReference>
<dbReference type="InterPro" id="IPR001680">
    <property type="entry name" value="WD40_rpt"/>
</dbReference>
<dbReference type="PANTHER" id="PTHR14494:SF0">
    <property type="entry name" value="ALADIN"/>
    <property type="match status" value="1"/>
</dbReference>
<dbReference type="PANTHER" id="PTHR14494">
    <property type="entry name" value="ALADIN/ADRACALIN/AAAS"/>
    <property type="match status" value="1"/>
</dbReference>
<dbReference type="Pfam" id="PF25460">
    <property type="entry name" value="Beta-prop_Aladin"/>
    <property type="match status" value="1"/>
</dbReference>
<dbReference type="SMART" id="SM00320">
    <property type="entry name" value="WD40"/>
    <property type="match status" value="4"/>
</dbReference>
<dbReference type="SUPFAM" id="SSF50960">
    <property type="entry name" value="TolB, C-terminal domain"/>
    <property type="match status" value="1"/>
</dbReference>
<comment type="subunit">
    <text evidence="6">Part of the nuclear pore complex (NPC). The NPC has an eight-fold symmetrical structure comprising a central transport channel and two rings, the cytoplasmic and nuclear rings, to which eight filaments are attached. The cytoplasmic filaments have loose ends, while the nuclear filaments are joined in a distal ring, forming a nuclear basket. NPCs are highly dynamic in configuration and composition, and can be devided in 3 subcomplexes, the NUP62 subcomplex, the NUP107-160 subcomplex and the NUP93 subcomplex, containing approximately 30 different nucleoporin proteins.</text>
</comment>
<comment type="interaction">
    <interactant intactId="EBI-4425567">
        <id>Q8GWR1</id>
    </interactant>
    <interactant intactId="EBI-25521547">
        <id>Q8GWK2</id>
        <label>At2g41710</label>
    </interactant>
    <organismsDiffer>false</organismsDiffer>
    <experiments>3</experiments>
</comment>
<comment type="subcellular location">
    <subcellularLocation>
        <location evidence="3">Nucleus envelope</location>
    </subcellularLocation>
    <subcellularLocation>
        <location evidence="6">Nucleus</location>
        <location evidence="6">Nuclear pore complex</location>
    </subcellularLocation>
</comment>
<comment type="sequence caution" evidence="5">
    <conflict type="erroneous gene model prediction">
        <sequence resource="EMBL-CDS" id="CAC00753"/>
    </conflict>
</comment>
<proteinExistence type="evidence at protein level"/>